<proteinExistence type="predicted"/>
<organism>
    <name type="scientific">Caenorhabditis elegans</name>
    <dbReference type="NCBI Taxonomy" id="6239"/>
    <lineage>
        <taxon>Eukaryota</taxon>
        <taxon>Metazoa</taxon>
        <taxon>Ecdysozoa</taxon>
        <taxon>Nematoda</taxon>
        <taxon>Chromadorea</taxon>
        <taxon>Rhabditida</taxon>
        <taxon>Rhabditina</taxon>
        <taxon>Rhabditomorpha</taxon>
        <taxon>Rhabditoidea</taxon>
        <taxon>Rhabditidae</taxon>
        <taxon>Peloderinae</taxon>
        <taxon>Caenorhabditis</taxon>
    </lineage>
</organism>
<keyword id="KW-1185">Reference proteome</keyword>
<dbReference type="EMBL" id="Z46937">
    <property type="protein sequence ID" value="CAA87059.2"/>
    <property type="molecule type" value="Genomic_DNA"/>
</dbReference>
<dbReference type="PIR" id="T22120">
    <property type="entry name" value="T22120"/>
</dbReference>
<dbReference type="RefSeq" id="NP_497848.1">
    <property type="nucleotide sequence ID" value="NM_065447.2"/>
</dbReference>
<dbReference type="SMR" id="Q09394"/>
<dbReference type="FunCoup" id="Q09394">
    <property type="interactions" value="11"/>
</dbReference>
<dbReference type="STRING" id="6239.F43C1.5.1"/>
<dbReference type="PaxDb" id="6239-F43C1.5"/>
<dbReference type="EnsemblMetazoa" id="F43C1.5.1">
    <property type="protein sequence ID" value="F43C1.5.1"/>
    <property type="gene ID" value="WBGene00009649"/>
</dbReference>
<dbReference type="GeneID" id="185692"/>
<dbReference type="KEGG" id="cel:CELE_F43C1.5"/>
<dbReference type="UCSC" id="F43C1.5">
    <property type="organism name" value="c. elegans"/>
</dbReference>
<dbReference type="AGR" id="WB:WBGene00009649"/>
<dbReference type="CTD" id="185692"/>
<dbReference type="WormBase" id="F43C1.5">
    <property type="protein sequence ID" value="CE28026"/>
    <property type="gene ID" value="WBGene00009649"/>
</dbReference>
<dbReference type="eggNOG" id="KOG4588">
    <property type="taxonomic scope" value="Eukaryota"/>
</dbReference>
<dbReference type="GeneTree" id="ENSGT00390000006762"/>
<dbReference type="HOGENOM" id="CLU_1082745_0_0_1"/>
<dbReference type="InParanoid" id="Q09394"/>
<dbReference type="OMA" id="TAQGYYS"/>
<dbReference type="OrthoDB" id="5794653at2759"/>
<dbReference type="PRO" id="PR:Q09394"/>
<dbReference type="Proteomes" id="UP000001940">
    <property type="component" value="Chromosome III"/>
</dbReference>
<dbReference type="Bgee" id="WBGene00009649">
    <property type="expression patterns" value="Expressed in adult organism and 1 other cell type or tissue"/>
</dbReference>
<dbReference type="GO" id="GO:0043130">
    <property type="term" value="F:ubiquitin binding"/>
    <property type="evidence" value="ECO:0007669"/>
    <property type="project" value="InterPro"/>
</dbReference>
<dbReference type="CDD" id="cd14279">
    <property type="entry name" value="CUE"/>
    <property type="match status" value="1"/>
</dbReference>
<dbReference type="Gene3D" id="1.10.8.10">
    <property type="entry name" value="DNA helicase RuvA subunit, C-terminal domain"/>
    <property type="match status" value="1"/>
</dbReference>
<dbReference type="InterPro" id="IPR003892">
    <property type="entry name" value="CUE"/>
</dbReference>
<dbReference type="InterPro" id="IPR040192">
    <property type="entry name" value="CUEDC1"/>
</dbReference>
<dbReference type="InterPro" id="IPR009060">
    <property type="entry name" value="UBA-like_sf"/>
</dbReference>
<dbReference type="PANTHER" id="PTHR13467">
    <property type="entry name" value="CUE DOMAIN CONTAINING PROTEIN 1"/>
    <property type="match status" value="1"/>
</dbReference>
<dbReference type="PANTHER" id="PTHR13467:SF3">
    <property type="entry name" value="CUE DOMAIN-CONTAINING PROTEIN 1"/>
    <property type="match status" value="1"/>
</dbReference>
<dbReference type="Pfam" id="PF02845">
    <property type="entry name" value="CUE"/>
    <property type="match status" value="1"/>
</dbReference>
<dbReference type="SMART" id="SM00546">
    <property type="entry name" value="CUE"/>
    <property type="match status" value="1"/>
</dbReference>
<dbReference type="SUPFAM" id="SSF46934">
    <property type="entry name" value="UBA-like"/>
    <property type="match status" value="1"/>
</dbReference>
<dbReference type="PROSITE" id="PS51140">
    <property type="entry name" value="CUE"/>
    <property type="match status" value="1"/>
</dbReference>
<evidence type="ECO:0000255" key="1">
    <source>
        <dbReference type="PROSITE-ProRule" id="PRU00468"/>
    </source>
</evidence>
<evidence type="ECO:0000256" key="2">
    <source>
        <dbReference type="SAM" id="MobiDB-lite"/>
    </source>
</evidence>
<accession>Q09394</accession>
<gene>
    <name type="ORF">F43C1.5</name>
</gene>
<reference key="1">
    <citation type="journal article" date="1998" name="Science">
        <title>Genome sequence of the nematode C. elegans: a platform for investigating biology.</title>
        <authorList>
            <consortium name="The C. elegans sequencing consortium"/>
        </authorList>
    </citation>
    <scope>NUCLEOTIDE SEQUENCE [LARGE SCALE GENOMIC DNA]</scope>
    <source>
        <strain>Bristol N2</strain>
    </source>
</reference>
<sequence>MTDYDDYEDRSGVVEEELLDFDRAMLDFQAMFPSLSNSHIEYVLRKYDGDVSATINELLYDNTPTTTTSESIPHGGDLTKLRQRRHEINEKLRENQKFLDTVTDVEIARAYEDQQLALLLEHREVNTLISEEKKKKSCSDSSSIQESRRHVKIPGKNSKNSKISVNKAKKLEPRRRSDEDRVPDGPYIGEGEVKSENFAAKIKETLRKASGSRISRLFSAP</sequence>
<feature type="chain" id="PRO_0000065338" description="Uncharacterized protein F43C1.5">
    <location>
        <begin position="1"/>
        <end position="221"/>
    </location>
</feature>
<feature type="domain" description="CUE" evidence="1">
    <location>
        <begin position="20"/>
        <end position="63"/>
    </location>
</feature>
<feature type="region of interest" description="Disordered" evidence="2">
    <location>
        <begin position="131"/>
        <end position="194"/>
    </location>
</feature>
<feature type="compositionally biased region" description="Low complexity" evidence="2">
    <location>
        <begin position="156"/>
        <end position="166"/>
    </location>
</feature>
<feature type="compositionally biased region" description="Basic and acidic residues" evidence="2">
    <location>
        <begin position="169"/>
        <end position="183"/>
    </location>
</feature>
<protein>
    <recommendedName>
        <fullName>Uncharacterized protein F43C1.5</fullName>
    </recommendedName>
</protein>
<name>YR75_CAEEL</name>